<protein>
    <recommendedName>
        <fullName evidence="6 7">Stigmurin</fullName>
    </recommendedName>
</protein>
<evidence type="ECO:0000269" key="1">
    <source>
    </source>
</evidence>
<evidence type="ECO:0000269" key="2">
    <source>
    </source>
</evidence>
<evidence type="ECO:0000269" key="3">
    <source>
    </source>
</evidence>
<evidence type="ECO:0000269" key="4">
    <source>
    </source>
</evidence>
<evidence type="ECO:0000269" key="5">
    <source>
    </source>
</evidence>
<evidence type="ECO:0000303" key="6">
    <source>
    </source>
</evidence>
<evidence type="ECO:0000303" key="7">
    <source>
    </source>
</evidence>
<evidence type="ECO:0000305" key="8"/>
<evidence type="ECO:0000305" key="9">
    <source>
    </source>
</evidence>
<evidence type="ECO:0007829" key="10">
    <source>
        <dbReference type="PDB" id="7KDQ"/>
    </source>
</evidence>
<dbReference type="EMBL" id="JK483709">
    <property type="status" value="NOT_ANNOTATED_CDS"/>
    <property type="molecule type" value="mRNA"/>
</dbReference>
<dbReference type="PDB" id="6VL2">
    <property type="method" value="NMR"/>
    <property type="chains" value="A=23-39"/>
</dbReference>
<dbReference type="PDB" id="7KDQ">
    <property type="method" value="NMR"/>
    <property type="chains" value="A=23-39"/>
</dbReference>
<dbReference type="PDBsum" id="6VL2"/>
<dbReference type="PDBsum" id="7KDQ"/>
<dbReference type="SMR" id="P0DQT1"/>
<dbReference type="GO" id="GO:0005576">
    <property type="term" value="C:extracellular region"/>
    <property type="evidence" value="ECO:0007669"/>
    <property type="project" value="UniProtKB-SubCell"/>
</dbReference>
<dbReference type="GO" id="GO:0042742">
    <property type="term" value="P:defense response to bacterium"/>
    <property type="evidence" value="ECO:0007669"/>
    <property type="project" value="UniProtKB-KW"/>
</dbReference>
<dbReference type="GO" id="GO:0050832">
    <property type="term" value="P:defense response to fungus"/>
    <property type="evidence" value="ECO:0007669"/>
    <property type="project" value="UniProtKB-KW"/>
</dbReference>
<dbReference type="GO" id="GO:0031640">
    <property type="term" value="P:killing of cells of another organism"/>
    <property type="evidence" value="ECO:0007669"/>
    <property type="project" value="UniProtKB-KW"/>
</dbReference>
<name>NDB4S_TITST</name>
<feature type="signal peptide" evidence="9">
    <location>
        <begin position="1"/>
        <end position="22"/>
    </location>
</feature>
<feature type="peptide" id="PRO_0000454781" description="Stigmurin" evidence="9">
    <location>
        <begin position="23"/>
        <end position="39"/>
    </location>
</feature>
<feature type="propeptide" id="PRO_0000454782" evidence="9">
    <location>
        <begin position="45"/>
        <end position="73"/>
    </location>
</feature>
<feature type="modified residue" description="Lysine amide" evidence="9">
    <location>
        <position position="39"/>
    </location>
</feature>
<feature type="mutagenesis site" description="In StigA16; gain of antibacterial activity towards Gram-negative bacteria, and towards the Gram-positive E.faecalis, increase in activity towards fungal strains, and increase in antiparasitic activity; when associated with K-29 and K-32." evidence="3">
    <original>S</original>
    <variation>K</variation>
    <location>
        <position position="25"/>
    </location>
</feature>
<feature type="mutagenesis site" description="In StigA31; gain of antibacterial activity towards Gram-negative bacteria, and towards the Gram-positive E.faecalis, increase in activity towards fungal strains, and increase in antiparasitic activity; when associated with K-29; 32-K-K-33 and K-36." evidence="4">
    <original>S</original>
    <variation>K</variation>
    <location>
        <position position="25"/>
    </location>
</feature>
<feature type="mutagenesis site" description="In StigA6; gain of antibacterial activity towards Gram-negative bacteria, and towards the Gram-positive E.faecalis, increase in activity towards fungal strains, and increase in antiparasitic activity; when associated with K-32. In StigA16; gain of antibacterial activity towards Gram-negative bacteria, and towards the Gram-positive E.faecalis, increase in activity towards fungal strains, and increase in antiparasitic activity; when associated with K-25 and K-32. StigA31; gain of antibacterial activity towards Gram-negative bacteria, and towards the Gram-positive E.faecalis, increase in activity towards fungal strains, and increase in antiparasitic activity; when associated with K-25; 32-K-K-33 and K-36." evidence="3 4">
    <original>S</original>
    <variation>K</variation>
    <location>
        <position position="29"/>
    </location>
</feature>
<feature type="mutagenesis site" description="StigA25; gain of antibacterial activity towards Gram-negative bacteria, and towards the Gram-positive E.faecalis, increase in activity towards fungal strains, and increase in antiparasitic activity; when associated with K-36. StigA31; gain of antibacterial activity towards Gram-negative bacteria, and towards the Gram-positive E.faecalis, increase in activity towards fungal strains, and increase in antiparasitic activity; when associated with K-25; K-29 and K-36." evidence="4">
    <original>GG</original>
    <variation>KK</variation>
    <location>
        <begin position="32"/>
        <end position="33"/>
    </location>
</feature>
<feature type="mutagenesis site" description="In StigA6; gain of antibacterial activity towards Gram-negative bacteria, and towards the Gram-positive E.faecalis, increase in activity towards fungal strains, and increase in antiparasitic activity; when associated with K-29. In StigA16; gain of antibacterial activity towards Gram-negative bacteria, and towards the Gram-positive E.faecalis, increase in activity towards fungal strains, and increase in antiparasitic activity; when associated with K-25; and K-29." evidence="3">
    <original>G</original>
    <variation>K</variation>
    <location>
        <position position="32"/>
    </location>
</feature>
<feature type="mutagenesis site" description="StigA25; gain of antibacterial activity towards Gram-negative bacteria, and towards the Gram-positive E.faecalis, increase in activity towards fungal strains, and increase in antiparasitic activity; when associated with K-32-33-K. StigA31; gain of antibacterial activity towards Gram-negative bacteria, and towards the Gram-positive E.faecalis, increase in activity towards fungal strains, and increase in antiparasitic activity; when associated with K-25; K-29 and 32-K-K-33." evidence="4">
    <original>S</original>
    <variation>K</variation>
    <location>
        <position position="36"/>
    </location>
</feature>
<feature type="helix" evidence="10">
    <location>
        <begin position="27"/>
        <end position="38"/>
    </location>
</feature>
<proteinExistence type="evidence at protein level"/>
<accession>P0DQT1</accession>
<accession>A0A8I3B021</accession>
<organism>
    <name type="scientific">Tityus stigmurus</name>
    <name type="common">Brazilian scorpion</name>
    <dbReference type="NCBI Taxonomy" id="50344"/>
    <lineage>
        <taxon>Eukaryota</taxon>
        <taxon>Metazoa</taxon>
        <taxon>Ecdysozoa</taxon>
        <taxon>Arthropoda</taxon>
        <taxon>Chelicerata</taxon>
        <taxon>Arachnida</taxon>
        <taxon>Scorpiones</taxon>
        <taxon>Buthida</taxon>
        <taxon>Buthoidea</taxon>
        <taxon>Buthidae</taxon>
        <taxon>Tityus</taxon>
    </lineage>
</organism>
<comment type="function">
    <text evidence="1 2 3 4 5">Antimicrobial peptide with activity against Gram-positive bacterial strains (S.aureus (MIC=2-140 uM), methicillin-resistant S.aureus (MRSA) (MIC=8-17 uM), S.epidermidis (MIC=1.17 uM), and the yeasts C.albicans, C.krusei, and C.glabrata (MIC=34-69 uM)) (PubMed:25805002, PubMed:27567704, PubMed:29670004, PubMed:30709056). Acts by disrupting the cell membrane (observed on outer layer of the S.aureus) (PubMed:30709056). Is not active against Gram-negative bacteria (E.coli, E.Cloacae, P.aeruginosa), and the Gram-positive bacterium E.faecalis (PubMed:25805002, PubMed:27567704, PubMed:29670004, PubMed:30709056). Also shows toxicity against several cell lines, but possess low hemolytic activity at the highest concentration tested (PubMed:25805002, PubMed:29670004, PubMed:30709056). Also shows antiparasitic activity against Trypanosoma cruzi by decreasing the viability of the epimastigote and trypomastigote forms of the parasite (PubMed:29670004, PubMed:30709056). Displays high hydroxyl radical scavenging activity (antioxidant action) (PubMed:33359395). In a wound infection model, the topical application of this peptide demonstrates antibacterial effects, as well as an ability to accelerate wound closure speed, which suggests the induction of tissue repair (PubMed:33359395). In the model of polymicrobial sepsis, it exhibits an antibiotic effect, reducing the levels of microorganisms in the infectious focus and the inflammatory responses in the lung and cecum of septic animals (PubMed:27567704).</text>
</comment>
<comment type="biophysicochemical properties">
    <phDependence>
        <text evidence="2">Stable to pH variation.</text>
    </phDependence>
</comment>
<comment type="subcellular location">
    <subcellularLocation>
        <location evidence="9">Secreted</location>
    </subcellularLocation>
</comment>
<comment type="tissue specificity">
    <text evidence="9">Expressed by the venom gland.</text>
</comment>
<comment type="similarity">
    <text evidence="8">Belongs to the non-disulfide-bridged peptide (NDBP) superfamily. Short antimicrobial peptide (group 4) family.</text>
</comment>
<keyword id="KW-0002">3D-structure</keyword>
<keyword id="KW-0027">Amidation</keyword>
<keyword id="KW-0044">Antibiotic</keyword>
<keyword id="KW-0929">Antimicrobial</keyword>
<keyword id="KW-0295">Fungicide</keyword>
<keyword id="KW-0964">Secreted</keyword>
<keyword id="KW-0732">Signal</keyword>
<sequence length="73" mass="8469">MQIKHLITLFFLVLIVADQCSAFFSLIPSLVGGLISAFKGRRKREISAQIEQYKDLQKREAELEKLLDRLPMY</sequence>
<reference key="1">
    <citation type="journal article" date="2015" name="Peptides">
        <title>Structural characterization of a novel peptide with antimicrobial activity from the venom gland of the scorpion Tityus stigmurus: stigmurin.</title>
        <authorList>
            <person name="de Melo E.T."/>
            <person name="Estrela A.B."/>
            <person name="Santos E.C."/>
            <person name="Machado P.R."/>
            <person name="Farias K.J."/>
            <person name="Torres T.M."/>
            <person name="Carvalho E."/>
            <person name="Lima J.P."/>
            <person name="Silva-Junior A.A."/>
            <person name="Barbosa E.G."/>
            <person name="Fernandes-Pedrosa M.F."/>
        </authorList>
    </citation>
    <scope>NUCLEOTIDE SEQUENCE [MRNA]</scope>
    <scope>FUNCTION</scope>
    <scope>3D-STRUCTURE MODELING</scope>
    <scope>SYNTHESIS OF 23-39 WITH C-TERMINAL AMIDATION</scope>
    <scope>AMIDATION AT LYS-39</scope>
    <source>
        <tissue>Venom gland</tissue>
    </source>
</reference>
<reference key="2">
    <citation type="journal article" date="2016" name="Toxicon">
        <title>Stigmurin and TsAP-2 from Tityus stigmurus scorpion venom: assessment of structure and therapeutic potential in experimental sepsis.</title>
        <authorList>
            <person name="Daniele-Silva A."/>
            <person name="Machado R.J."/>
            <person name="Monteiro N.K."/>
            <person name="Estrela A.B."/>
            <person name="Santos E.C."/>
            <person name="Carvalho E."/>
            <person name="Araujo Junior R.F."/>
            <person name="Melo-Silveira R.F."/>
            <person name="Rocha H.A."/>
            <person name="Silva-Junior A.A."/>
            <person name="Fernandes-Pedrosa M.F."/>
        </authorList>
    </citation>
    <scope>FUNCTION</scope>
    <scope>BIOPHYSICOCHEMICAL PROPERTIES</scope>
    <scope>BIOASSAY IN ANIMAL MODEL OF SEPSIS</scope>
    <scope>SYNTHESIS OF 23-39 WITH C-TERMINAL AMIDATION</scope>
</reference>
<reference key="3">
    <citation type="journal article" date="2018" name="Toxins">
        <title>Analogs of the scorpion venom peptide stigmurin: structural assessment, toxicity, and increased antimicrobial activity.</title>
        <authorList>
            <person name="Parente A.M.S."/>
            <person name="Daniele-Silva A."/>
            <person name="Furtado A.A."/>
            <person name="Melo M.A."/>
            <person name="Lacerda A.F."/>
            <person name="Queiroz M."/>
            <person name="Moreno C."/>
            <person name="Santos E."/>
            <person name="Rocha H.A.O."/>
            <person name="Barbosa E.G."/>
            <person name="Carvalho E."/>
            <person name="Silva-Junior A.A."/>
            <person name="Silva M.S."/>
            <person name="Fernandes-Pedrosa M.F."/>
        </authorList>
    </citation>
    <scope>FUNCTION</scope>
    <scope>MUTAGENESIS OF SER-25; SER-29 AND GLY-32</scope>
    <scope>SYNTHESIS OF 23-39 WITH C-TERMINAL AMIDATION</scope>
</reference>
<reference key="4">
    <citation type="journal article" date="2019" name="Int. J. Mol. Sci.">
        <title>Potent and broad-spectrum antimicrobial activity of analogs from the scorpion peptide stigmurin.</title>
        <authorList>
            <person name="Amorim-Carmo B."/>
            <person name="Daniele-Silva A."/>
            <person name="Parente A.M.S."/>
            <person name="Furtado A.A."/>
            <person name="Carvalho E."/>
            <person name="Oliveira J.W.F."/>
            <person name="Santos E.C.G."/>
            <person name="Silva M.S."/>
            <person name="Silva S.R.B."/>
            <person name="Silva-Junior A.A."/>
            <person name="Monteiro N.K."/>
            <person name="Fernandes-Pedrosa M.F."/>
        </authorList>
    </citation>
    <scope>FUNCTION</scope>
    <scope>MUTAGENESIS OF SER-25; SER-29; GLY-32; GLY-33 AND SER-36</scope>
    <scope>SYNTHESIS OF 23-39 WITH C-TERMINAL AMIDATION</scope>
    <scope>3D-STRUCTURE MODELING</scope>
</reference>
<reference key="5">
    <citation type="journal article" date="2021" name="Peptides">
        <title>NMR three-dimensional structure of the cationic peptide Stigmurin from Tityus stigmurus scorpion venom: in vitro antioxidant and in vivo antibacterial and healing activity.</title>
        <authorList>
            <person name="Daniele-Silva A."/>
            <person name="Rodrigues S.C.S."/>
            <person name="Dos Santos E.C.G."/>
            <person name="Queiroz Neto M.F."/>
            <person name="Rocha H.A.O."/>
            <person name="Silva-Junior A.A.D."/>
            <person name="Resende J.M."/>
            <person name="Araujo R.M."/>
            <person name="Fernandes-Pedrosa M.F."/>
        </authorList>
    </citation>
    <scope>STRUCTURE BY NMR OF 23-39</scope>
    <scope>FUNCTION</scope>
    <scope>BIOASSAY</scope>
    <scope>SYNTHESIS OF 23-39 WITH C-TERMINAL AMIDATION</scope>
</reference>